<comment type="function">
    <text evidence="2">Involved in oxygen transport from gills to the various peripheral tissues.</text>
</comment>
<comment type="subunit">
    <text>Hb1 is a heterotetramer of two alpha-1 chains and two beta-1 chains; Hb2 is a heterotetramer of two alpha-2 chains and two beta-1 chains.</text>
</comment>
<comment type="tissue specificity">
    <text evidence="2">Red blood cells.</text>
</comment>
<comment type="miscellaneous">
    <text>Hb1 and Hb2 display a low, effector-enhanced Bohr effect and no Root effect.</text>
</comment>
<comment type="similarity">
    <text evidence="1">Belongs to the globin family.</text>
</comment>
<accession>P83272</accession>
<sequence length="146" mass="16033">VKWSDKERAVIISIFAGLDYEDIGPKALSRCLIVYPWTQRYFGSFGNLSTPAAIMGNPKIAAHGIKVLHGLDRGVKNMDNIKDAYTELSILHSETLHVDPDNFKLLADCLTIVVAAKMGCAFTPDTQLAFQKFLAVVVSALGKQYC</sequence>
<gene>
    <name type="primary">hbb1</name>
</gene>
<dbReference type="SMR" id="P83272"/>
<dbReference type="GO" id="GO:0072562">
    <property type="term" value="C:blood microparticle"/>
    <property type="evidence" value="ECO:0007669"/>
    <property type="project" value="TreeGrafter"/>
</dbReference>
<dbReference type="GO" id="GO:0031838">
    <property type="term" value="C:haptoglobin-hemoglobin complex"/>
    <property type="evidence" value="ECO:0007669"/>
    <property type="project" value="TreeGrafter"/>
</dbReference>
<dbReference type="GO" id="GO:0005833">
    <property type="term" value="C:hemoglobin complex"/>
    <property type="evidence" value="ECO:0007669"/>
    <property type="project" value="InterPro"/>
</dbReference>
<dbReference type="GO" id="GO:0031720">
    <property type="term" value="F:haptoglobin binding"/>
    <property type="evidence" value="ECO:0007669"/>
    <property type="project" value="TreeGrafter"/>
</dbReference>
<dbReference type="GO" id="GO:0020037">
    <property type="term" value="F:heme binding"/>
    <property type="evidence" value="ECO:0007669"/>
    <property type="project" value="InterPro"/>
</dbReference>
<dbReference type="GO" id="GO:0046872">
    <property type="term" value="F:metal ion binding"/>
    <property type="evidence" value="ECO:0007669"/>
    <property type="project" value="UniProtKB-KW"/>
</dbReference>
<dbReference type="GO" id="GO:0043177">
    <property type="term" value="F:organic acid binding"/>
    <property type="evidence" value="ECO:0007669"/>
    <property type="project" value="TreeGrafter"/>
</dbReference>
<dbReference type="GO" id="GO:0019825">
    <property type="term" value="F:oxygen binding"/>
    <property type="evidence" value="ECO:0007669"/>
    <property type="project" value="InterPro"/>
</dbReference>
<dbReference type="GO" id="GO:0005344">
    <property type="term" value="F:oxygen carrier activity"/>
    <property type="evidence" value="ECO:0007669"/>
    <property type="project" value="UniProtKB-KW"/>
</dbReference>
<dbReference type="GO" id="GO:0004601">
    <property type="term" value="F:peroxidase activity"/>
    <property type="evidence" value="ECO:0007669"/>
    <property type="project" value="TreeGrafter"/>
</dbReference>
<dbReference type="GO" id="GO:0042744">
    <property type="term" value="P:hydrogen peroxide catabolic process"/>
    <property type="evidence" value="ECO:0007669"/>
    <property type="project" value="TreeGrafter"/>
</dbReference>
<dbReference type="CDD" id="cd08925">
    <property type="entry name" value="Hb-beta-like"/>
    <property type="match status" value="1"/>
</dbReference>
<dbReference type="FunFam" id="1.10.490.10:FF:000001">
    <property type="entry name" value="Hemoglobin subunit beta"/>
    <property type="match status" value="1"/>
</dbReference>
<dbReference type="Gene3D" id="1.10.490.10">
    <property type="entry name" value="Globins"/>
    <property type="match status" value="1"/>
</dbReference>
<dbReference type="InterPro" id="IPR000971">
    <property type="entry name" value="Globin"/>
</dbReference>
<dbReference type="InterPro" id="IPR009050">
    <property type="entry name" value="Globin-like_sf"/>
</dbReference>
<dbReference type="InterPro" id="IPR012292">
    <property type="entry name" value="Globin/Proto"/>
</dbReference>
<dbReference type="InterPro" id="IPR002337">
    <property type="entry name" value="Hemoglobin_b"/>
</dbReference>
<dbReference type="InterPro" id="IPR050056">
    <property type="entry name" value="Hemoglobin_oxygen_transport"/>
</dbReference>
<dbReference type="PANTHER" id="PTHR11442">
    <property type="entry name" value="HEMOGLOBIN FAMILY MEMBER"/>
    <property type="match status" value="1"/>
</dbReference>
<dbReference type="PANTHER" id="PTHR11442:SF7">
    <property type="entry name" value="HEMOGLOBIN SUBUNIT EPSILON"/>
    <property type="match status" value="1"/>
</dbReference>
<dbReference type="Pfam" id="PF00042">
    <property type="entry name" value="Globin"/>
    <property type="match status" value="1"/>
</dbReference>
<dbReference type="PRINTS" id="PR00814">
    <property type="entry name" value="BETAHAEM"/>
</dbReference>
<dbReference type="SUPFAM" id="SSF46458">
    <property type="entry name" value="Globin-like"/>
    <property type="match status" value="1"/>
</dbReference>
<dbReference type="PROSITE" id="PS01033">
    <property type="entry name" value="GLOBIN"/>
    <property type="match status" value="1"/>
</dbReference>
<organism>
    <name type="scientific">Anarhichas minor</name>
    <name type="common">Arctic spotted wolffish</name>
    <dbReference type="NCBI Taxonomy" id="65739"/>
    <lineage>
        <taxon>Eukaryota</taxon>
        <taxon>Metazoa</taxon>
        <taxon>Chordata</taxon>
        <taxon>Craniata</taxon>
        <taxon>Vertebrata</taxon>
        <taxon>Euteleostomi</taxon>
        <taxon>Actinopterygii</taxon>
        <taxon>Neopterygii</taxon>
        <taxon>Teleostei</taxon>
        <taxon>Neoteleostei</taxon>
        <taxon>Acanthomorphata</taxon>
        <taxon>Eupercaria</taxon>
        <taxon>Perciformes</taxon>
        <taxon>Cottioidei</taxon>
        <taxon>Zoarcales</taxon>
        <taxon>Anarhichadidae</taxon>
        <taxon>Anarhichas</taxon>
    </lineage>
</organism>
<keyword id="KW-0903">Direct protein sequencing</keyword>
<keyword id="KW-0349">Heme</keyword>
<keyword id="KW-0408">Iron</keyword>
<keyword id="KW-0479">Metal-binding</keyword>
<keyword id="KW-0561">Oxygen transport</keyword>
<keyword id="KW-0813">Transport</keyword>
<name>HBB1_ANAMI</name>
<evidence type="ECO:0000255" key="1">
    <source>
        <dbReference type="PROSITE-ProRule" id="PRU00238"/>
    </source>
</evidence>
<evidence type="ECO:0000269" key="2">
    <source>
    </source>
</evidence>
<feature type="chain" id="PRO_0000052866" description="Hemoglobin subunit beta-1">
    <location>
        <begin position="1"/>
        <end position="146"/>
    </location>
</feature>
<feature type="domain" description="Globin" evidence="1">
    <location>
        <begin position="2"/>
        <end position="146"/>
    </location>
</feature>
<feature type="binding site" description="distal binding residue" evidence="1">
    <location>
        <position position="63"/>
    </location>
    <ligand>
        <name>heme b</name>
        <dbReference type="ChEBI" id="CHEBI:60344"/>
    </ligand>
    <ligandPart>
        <name>Fe</name>
        <dbReference type="ChEBI" id="CHEBI:18248"/>
    </ligandPart>
</feature>
<feature type="binding site" description="proximal binding residue" evidence="1">
    <location>
        <position position="92"/>
    </location>
    <ligand>
        <name>heme b</name>
        <dbReference type="ChEBI" id="CHEBI:60344"/>
    </ligand>
    <ligandPart>
        <name>Fe</name>
        <dbReference type="ChEBI" id="CHEBI:18248"/>
    </ligandPart>
</feature>
<proteinExistence type="evidence at protein level"/>
<protein>
    <recommendedName>
        <fullName>Hemoglobin subunit beta-1</fullName>
    </recommendedName>
    <alternativeName>
        <fullName>Beta-1-globin</fullName>
    </alternativeName>
    <alternativeName>
        <fullName>Hemoglobin beta-1 chain</fullName>
    </alternativeName>
</protein>
<reference key="1">
    <citation type="journal article" date="2002" name="J. Biol. Chem.">
        <title>The functionally distinct hemoglobins of the Arctic spotted wolffish Anarhichas minor.</title>
        <authorList>
            <person name="Verde C."/>
            <person name="Carratore V."/>
            <person name="Riccio A."/>
            <person name="Tamburrini M."/>
            <person name="Parisi E."/>
            <person name="Di Prisco G."/>
        </authorList>
    </citation>
    <scope>PROTEIN SEQUENCE</scope>
    <scope>FUNCTION</scope>
    <scope>TISSUE SPECIFICITY</scope>
</reference>